<organism>
    <name type="scientific">Streptococcus pneumoniae (strain 70585)</name>
    <dbReference type="NCBI Taxonomy" id="488221"/>
    <lineage>
        <taxon>Bacteria</taxon>
        <taxon>Bacillati</taxon>
        <taxon>Bacillota</taxon>
        <taxon>Bacilli</taxon>
        <taxon>Lactobacillales</taxon>
        <taxon>Streptococcaceae</taxon>
        <taxon>Streptococcus</taxon>
    </lineage>
</organism>
<proteinExistence type="inferred from homology"/>
<gene>
    <name evidence="1" type="primary">eno</name>
    <name type="ordered locus">SP70585_1199</name>
</gene>
<name>ENO_STRP7</name>
<protein>
    <recommendedName>
        <fullName evidence="1">Enolase</fullName>
        <ecNumber evidence="1">4.2.1.11</ecNumber>
    </recommendedName>
    <alternativeName>
        <fullName evidence="1">2-phospho-D-glycerate hydro-lyase</fullName>
    </alternativeName>
    <alternativeName>
        <fullName evidence="1">2-phosphoglycerate dehydratase</fullName>
    </alternativeName>
</protein>
<accession>C1C7C0</accession>
<dbReference type="EC" id="4.2.1.11" evidence="1"/>
<dbReference type="EMBL" id="CP000918">
    <property type="protein sequence ID" value="ACO16301.1"/>
    <property type="molecule type" value="Genomic_DNA"/>
</dbReference>
<dbReference type="RefSeq" id="WP_000022813.1">
    <property type="nucleotide sequence ID" value="NC_012468.1"/>
</dbReference>
<dbReference type="SMR" id="C1C7C0"/>
<dbReference type="GeneID" id="93739591"/>
<dbReference type="KEGG" id="snm:SP70585_1199"/>
<dbReference type="HOGENOM" id="CLU_031223_2_1_9"/>
<dbReference type="UniPathway" id="UPA00109">
    <property type="reaction ID" value="UER00187"/>
</dbReference>
<dbReference type="Proteomes" id="UP000002211">
    <property type="component" value="Chromosome"/>
</dbReference>
<dbReference type="GO" id="GO:0009986">
    <property type="term" value="C:cell surface"/>
    <property type="evidence" value="ECO:0007669"/>
    <property type="project" value="UniProtKB-SubCell"/>
</dbReference>
<dbReference type="GO" id="GO:0005576">
    <property type="term" value="C:extracellular region"/>
    <property type="evidence" value="ECO:0007669"/>
    <property type="project" value="UniProtKB-SubCell"/>
</dbReference>
<dbReference type="GO" id="GO:0009274">
    <property type="term" value="C:peptidoglycan-based cell wall"/>
    <property type="evidence" value="ECO:0007669"/>
    <property type="project" value="UniProtKB-ARBA"/>
</dbReference>
<dbReference type="GO" id="GO:0000015">
    <property type="term" value="C:phosphopyruvate hydratase complex"/>
    <property type="evidence" value="ECO:0007669"/>
    <property type="project" value="InterPro"/>
</dbReference>
<dbReference type="GO" id="GO:0000287">
    <property type="term" value="F:magnesium ion binding"/>
    <property type="evidence" value="ECO:0007669"/>
    <property type="project" value="UniProtKB-UniRule"/>
</dbReference>
<dbReference type="GO" id="GO:0004634">
    <property type="term" value="F:phosphopyruvate hydratase activity"/>
    <property type="evidence" value="ECO:0007669"/>
    <property type="project" value="UniProtKB-UniRule"/>
</dbReference>
<dbReference type="GO" id="GO:0006096">
    <property type="term" value="P:glycolytic process"/>
    <property type="evidence" value="ECO:0007669"/>
    <property type="project" value="UniProtKB-UniRule"/>
</dbReference>
<dbReference type="CDD" id="cd03313">
    <property type="entry name" value="enolase"/>
    <property type="match status" value="1"/>
</dbReference>
<dbReference type="FunFam" id="3.20.20.120:FF:000001">
    <property type="entry name" value="Enolase"/>
    <property type="match status" value="1"/>
</dbReference>
<dbReference type="FunFam" id="3.30.390.10:FF:000001">
    <property type="entry name" value="Enolase"/>
    <property type="match status" value="1"/>
</dbReference>
<dbReference type="Gene3D" id="3.20.20.120">
    <property type="entry name" value="Enolase-like C-terminal domain"/>
    <property type="match status" value="1"/>
</dbReference>
<dbReference type="Gene3D" id="3.30.390.10">
    <property type="entry name" value="Enolase-like, N-terminal domain"/>
    <property type="match status" value="1"/>
</dbReference>
<dbReference type="HAMAP" id="MF_00318">
    <property type="entry name" value="Enolase"/>
    <property type="match status" value="1"/>
</dbReference>
<dbReference type="InterPro" id="IPR000941">
    <property type="entry name" value="Enolase"/>
</dbReference>
<dbReference type="InterPro" id="IPR036849">
    <property type="entry name" value="Enolase-like_C_sf"/>
</dbReference>
<dbReference type="InterPro" id="IPR029017">
    <property type="entry name" value="Enolase-like_N"/>
</dbReference>
<dbReference type="InterPro" id="IPR020810">
    <property type="entry name" value="Enolase_C"/>
</dbReference>
<dbReference type="InterPro" id="IPR020809">
    <property type="entry name" value="Enolase_CS"/>
</dbReference>
<dbReference type="InterPro" id="IPR020811">
    <property type="entry name" value="Enolase_N"/>
</dbReference>
<dbReference type="NCBIfam" id="TIGR01060">
    <property type="entry name" value="eno"/>
    <property type="match status" value="1"/>
</dbReference>
<dbReference type="PANTHER" id="PTHR11902">
    <property type="entry name" value="ENOLASE"/>
    <property type="match status" value="1"/>
</dbReference>
<dbReference type="PANTHER" id="PTHR11902:SF1">
    <property type="entry name" value="ENOLASE"/>
    <property type="match status" value="1"/>
</dbReference>
<dbReference type="Pfam" id="PF00113">
    <property type="entry name" value="Enolase_C"/>
    <property type="match status" value="1"/>
</dbReference>
<dbReference type="Pfam" id="PF03952">
    <property type="entry name" value="Enolase_N"/>
    <property type="match status" value="1"/>
</dbReference>
<dbReference type="PIRSF" id="PIRSF001400">
    <property type="entry name" value="Enolase"/>
    <property type="match status" value="1"/>
</dbReference>
<dbReference type="PRINTS" id="PR00148">
    <property type="entry name" value="ENOLASE"/>
</dbReference>
<dbReference type="SFLD" id="SFLDS00001">
    <property type="entry name" value="Enolase"/>
    <property type="match status" value="1"/>
</dbReference>
<dbReference type="SFLD" id="SFLDF00002">
    <property type="entry name" value="enolase"/>
    <property type="match status" value="1"/>
</dbReference>
<dbReference type="SMART" id="SM01192">
    <property type="entry name" value="Enolase_C"/>
    <property type="match status" value="1"/>
</dbReference>
<dbReference type="SMART" id="SM01193">
    <property type="entry name" value="Enolase_N"/>
    <property type="match status" value="1"/>
</dbReference>
<dbReference type="SUPFAM" id="SSF51604">
    <property type="entry name" value="Enolase C-terminal domain-like"/>
    <property type="match status" value="1"/>
</dbReference>
<dbReference type="SUPFAM" id="SSF54826">
    <property type="entry name" value="Enolase N-terminal domain-like"/>
    <property type="match status" value="1"/>
</dbReference>
<dbReference type="PROSITE" id="PS00164">
    <property type="entry name" value="ENOLASE"/>
    <property type="match status" value="1"/>
</dbReference>
<sequence>MSIITDVYAREVLDSRGNPTLEVEVYTESGAFGRGMVPSGASTGEHEAVELRDGDKSRYGGLGTQKAVDNVNNIIAEAIIGYDVRDQQAIDRAMIALDGTPNKGKLGANAILGVSIAVARAAADYLEIPLYSYLGGFNTKVLPTPMMNIINGGSHSDAPIAFQEFMILPVGAPTFKEALRYGAEIFHALKKILKSRGLETAVGDEGGFAPRFEGTEDGVETILAAIEAAGYVPGKDVFIGFDCASSEFYDKERKVYDYTKFEGEGAAVRTSAEQIDYLEELVNKYPIITIEDGMDENDWDGWKALTERLGKKVQLVGDDFFVTNTDYLARGIQEGAANSILIKVNQIGTLTETFEAIEMAKEAGYTAVVSHRSGETEDSTIADIAVATNAGQIKTGSLSRTDRIAKYNQLLRIEDQLGEVAEYRGLKSFYNLKK</sequence>
<keyword id="KW-0963">Cytoplasm</keyword>
<keyword id="KW-0324">Glycolysis</keyword>
<keyword id="KW-0456">Lyase</keyword>
<keyword id="KW-0460">Magnesium</keyword>
<keyword id="KW-0479">Metal-binding</keyword>
<keyword id="KW-0964">Secreted</keyword>
<reference key="1">
    <citation type="journal article" date="2010" name="Genome Biol.">
        <title>Structure and dynamics of the pan-genome of Streptococcus pneumoniae and closely related species.</title>
        <authorList>
            <person name="Donati C."/>
            <person name="Hiller N.L."/>
            <person name="Tettelin H."/>
            <person name="Muzzi A."/>
            <person name="Croucher N.J."/>
            <person name="Angiuoli S.V."/>
            <person name="Oggioni M."/>
            <person name="Dunning Hotopp J.C."/>
            <person name="Hu F.Z."/>
            <person name="Riley D.R."/>
            <person name="Covacci A."/>
            <person name="Mitchell T.J."/>
            <person name="Bentley S.D."/>
            <person name="Kilian M."/>
            <person name="Ehrlich G.D."/>
            <person name="Rappuoli R."/>
            <person name="Moxon E.R."/>
            <person name="Masignani V."/>
        </authorList>
    </citation>
    <scope>NUCLEOTIDE SEQUENCE [LARGE SCALE GENOMIC DNA]</scope>
    <source>
        <strain>70585</strain>
    </source>
</reference>
<evidence type="ECO:0000255" key="1">
    <source>
        <dbReference type="HAMAP-Rule" id="MF_00318"/>
    </source>
</evidence>
<feature type="chain" id="PRO_1000133022" description="Enolase">
    <location>
        <begin position="1"/>
        <end position="434"/>
    </location>
</feature>
<feature type="active site" description="Proton donor" evidence="1">
    <location>
        <position position="205"/>
    </location>
</feature>
<feature type="active site" description="Proton acceptor" evidence="1">
    <location>
        <position position="343"/>
    </location>
</feature>
<feature type="binding site" evidence="1">
    <location>
        <position position="163"/>
    </location>
    <ligand>
        <name>(2R)-2-phosphoglycerate</name>
        <dbReference type="ChEBI" id="CHEBI:58289"/>
    </ligand>
</feature>
<feature type="binding site" evidence="1">
    <location>
        <position position="242"/>
    </location>
    <ligand>
        <name>Mg(2+)</name>
        <dbReference type="ChEBI" id="CHEBI:18420"/>
    </ligand>
</feature>
<feature type="binding site" evidence="1">
    <location>
        <position position="291"/>
    </location>
    <ligand>
        <name>Mg(2+)</name>
        <dbReference type="ChEBI" id="CHEBI:18420"/>
    </ligand>
</feature>
<feature type="binding site" evidence="1">
    <location>
        <position position="318"/>
    </location>
    <ligand>
        <name>Mg(2+)</name>
        <dbReference type="ChEBI" id="CHEBI:18420"/>
    </ligand>
</feature>
<feature type="binding site" evidence="1">
    <location>
        <position position="343"/>
    </location>
    <ligand>
        <name>(2R)-2-phosphoglycerate</name>
        <dbReference type="ChEBI" id="CHEBI:58289"/>
    </ligand>
</feature>
<feature type="binding site" evidence="1">
    <location>
        <position position="372"/>
    </location>
    <ligand>
        <name>(2R)-2-phosphoglycerate</name>
        <dbReference type="ChEBI" id="CHEBI:58289"/>
    </ligand>
</feature>
<feature type="binding site" evidence="1">
    <location>
        <position position="373"/>
    </location>
    <ligand>
        <name>(2R)-2-phosphoglycerate</name>
        <dbReference type="ChEBI" id="CHEBI:58289"/>
    </ligand>
</feature>
<feature type="binding site" evidence="1">
    <location>
        <position position="394"/>
    </location>
    <ligand>
        <name>(2R)-2-phosphoglycerate</name>
        <dbReference type="ChEBI" id="CHEBI:58289"/>
    </ligand>
</feature>
<comment type="function">
    <text evidence="1">Catalyzes the reversible conversion of 2-phosphoglycerate (2-PG) into phosphoenolpyruvate (PEP). It is essential for the degradation of carbohydrates via glycolysis.</text>
</comment>
<comment type="catalytic activity">
    <reaction evidence="1">
        <text>(2R)-2-phosphoglycerate = phosphoenolpyruvate + H2O</text>
        <dbReference type="Rhea" id="RHEA:10164"/>
        <dbReference type="ChEBI" id="CHEBI:15377"/>
        <dbReference type="ChEBI" id="CHEBI:58289"/>
        <dbReference type="ChEBI" id="CHEBI:58702"/>
        <dbReference type="EC" id="4.2.1.11"/>
    </reaction>
</comment>
<comment type="cofactor">
    <cofactor evidence="1">
        <name>Mg(2+)</name>
        <dbReference type="ChEBI" id="CHEBI:18420"/>
    </cofactor>
    <text evidence="1">Binds a second Mg(2+) ion via substrate during catalysis.</text>
</comment>
<comment type="pathway">
    <text evidence="1">Carbohydrate degradation; glycolysis; pyruvate from D-glyceraldehyde 3-phosphate: step 4/5.</text>
</comment>
<comment type="subcellular location">
    <subcellularLocation>
        <location evidence="1">Cytoplasm</location>
    </subcellularLocation>
    <subcellularLocation>
        <location evidence="1">Secreted</location>
    </subcellularLocation>
    <subcellularLocation>
        <location evidence="1">Cell surface</location>
    </subcellularLocation>
    <text evidence="1">Fractions of enolase are present in both the cytoplasm and on the cell surface.</text>
</comment>
<comment type="similarity">
    <text evidence="1">Belongs to the enolase family.</text>
</comment>